<evidence type="ECO:0000256" key="1">
    <source>
        <dbReference type="SAM" id="MobiDB-lite"/>
    </source>
</evidence>
<evidence type="ECO:0000269" key="2">
    <source>
    </source>
</evidence>
<evidence type="ECO:0000269" key="3">
    <source>
    </source>
</evidence>
<evidence type="ECO:0000269" key="4">
    <source>
    </source>
</evidence>
<evidence type="ECO:0000269" key="5">
    <source>
    </source>
</evidence>
<evidence type="ECO:0000305" key="6"/>
<evidence type="ECO:0007744" key="7">
    <source>
    </source>
</evidence>
<evidence type="ECO:0007744" key="8">
    <source>
    </source>
</evidence>
<evidence type="ECO:0007744" key="9">
    <source>
    </source>
</evidence>
<feature type="chain" id="PRO_0000097751" description="Protein SIC1">
    <location>
        <begin position="1"/>
        <end position="284"/>
    </location>
</feature>
<feature type="region of interest" description="Disordered" evidence="1">
    <location>
        <begin position="1"/>
        <end position="89"/>
    </location>
</feature>
<feature type="compositionally biased region" description="Polar residues" evidence="1">
    <location>
        <begin position="18"/>
        <end position="52"/>
    </location>
</feature>
<feature type="compositionally biased region" description="Polar residues" evidence="1">
    <location>
        <begin position="61"/>
        <end position="79"/>
    </location>
</feature>
<feature type="modified residue" description="Phosphothreonine; by PHO85" evidence="5">
    <location>
        <position position="5"/>
    </location>
</feature>
<feature type="modified residue" description="Phosphothreonine" evidence="5">
    <location>
        <position position="33"/>
    </location>
</feature>
<feature type="modified residue" description="Phosphoserine" evidence="5">
    <location>
        <position position="76"/>
    </location>
</feature>
<feature type="modified residue" description="Phosphothreonine" evidence="4 8">
    <location>
        <position position="173"/>
    </location>
</feature>
<feature type="modified residue" description="Phosphoserine" evidence="7 9">
    <location>
        <position position="198"/>
    </location>
</feature>
<feature type="modified residue" description="Phosphoserine" evidence="8 9">
    <location>
        <position position="201"/>
    </location>
</feature>
<feature type="modified residue" description="Lysine derivative">
    <location>
        <position position="268"/>
    </location>
</feature>
<feature type="modified residue" description="Lysine derivative">
    <location>
        <position position="272"/>
    </location>
</feature>
<feature type="modified residue" description="Lysine derivative">
    <location>
        <position position="274"/>
    </location>
</feature>
<feature type="mutagenesis site" description="Impairs the ability to arrest the cell cycle." evidence="4">
    <original>T</original>
    <variation>A</variation>
    <location>
        <position position="173"/>
    </location>
</feature>
<feature type="sequence conflict" description="In Ref. 2; CAA55118." evidence="6" ref="2">
    <original>I</original>
    <variation>T</variation>
    <location>
        <position position="167"/>
    </location>
</feature>
<sequence length="284" mass="32223">MTPSTPPRSRGTRYLAQPSGNTSSSALMQGQKTPQKPSQNLVPVTPSTTKSFKNAPLLAPPNSNMGMTSPFNGLTSPQRSPFPKSSVKRTLFQFESHDNGTVREEQEPLGRVNRILFPTQQNVDIDAAEEEEEGEVLLPPSRPTSARQLHLSLERDEFDQTHRKKIIKDVPGTPSDKVITFELAKNWNNNSPKNDARSQESEDEEDIIINPVRVGKNPFASDELVTQEIRNERKRAMLRENPDIEDVITYVNKKGEVVEKRRLTDEEKRRFKPKALFQSRDQEH</sequence>
<keyword id="KW-0002">3D-structure</keyword>
<keyword id="KW-0963">Cytoplasm</keyword>
<keyword id="KW-0903">Direct protein sequencing</keyword>
<keyword id="KW-0539">Nucleus</keyword>
<keyword id="KW-0597">Phosphoprotein</keyword>
<keyword id="KW-1185">Reference proteome</keyword>
<protein>
    <recommendedName>
        <fullName>Protein SIC1</fullName>
    </recommendedName>
    <alternativeName>
        <fullName>CDK inhibitor p40</fullName>
    </alternativeName>
</protein>
<comment type="function">
    <text evidence="4">Substrate and inhibitor of the cyclin-dependent protein kinase CDC28. Its activity could be important for faithful segregation of chromosomes to daughter cells. It acts in response to a signal from a post-start checkpoint.</text>
</comment>
<comment type="subunit">
    <text evidence="4">Interacts with HOG1.</text>
</comment>
<comment type="interaction">
    <interactant intactId="EBI-17127">
        <id>P38634</id>
    </interactant>
    <interactant intactId="EBI-4192">
        <id>Q00684</id>
        <label>CDC14</label>
    </interactant>
    <organismsDiffer>false</organismsDiffer>
    <experiments>2</experiments>
</comment>
<comment type="interaction">
    <interactant intactId="EBI-17127">
        <id>P38634</id>
    </interactant>
    <interactant intactId="EBI-4434">
        <id>P07834</id>
        <label>CDC4</label>
    </interactant>
    <organismsDiffer>false</organismsDiffer>
    <experiments>5</experiments>
</comment>
<comment type="interaction">
    <interactant intactId="EBI-17127">
        <id>P38634</id>
    </interactant>
    <interactant intactId="EBI-8437">
        <id>P32485</id>
        <label>HOG1</label>
    </interactant>
    <organismsDiffer>false</organismsDiffer>
    <experiments>4</experiments>
</comment>
<comment type="subcellular location">
    <subcellularLocation>
        <location evidence="2">Cytoplasm</location>
    </subcellularLocation>
    <subcellularLocation>
        <location evidence="2">Nucleus</location>
    </subcellularLocation>
</comment>
<comment type="PTM">
    <text evidence="4 5">Phosphorylated by cyclin-dependent kinases CDC28 and PHO85 in association with G1-cyclins, promoting degradation of SIC1 and exit form G1.</text>
</comment>
<comment type="PTM">
    <text>May contain a covalently attached chromophore.</text>
</comment>
<comment type="PTM">
    <text>The N-terminus is blocked.</text>
</comment>
<comment type="miscellaneous">
    <text evidence="3">Present with 768 molecules/cell in log phase SD medium.</text>
</comment>
<accession>P38634</accession>
<accession>D6VY79</accession>
<organism>
    <name type="scientific">Saccharomyces cerevisiae (strain ATCC 204508 / S288c)</name>
    <name type="common">Baker's yeast</name>
    <dbReference type="NCBI Taxonomy" id="559292"/>
    <lineage>
        <taxon>Eukaryota</taxon>
        <taxon>Fungi</taxon>
        <taxon>Dikarya</taxon>
        <taxon>Ascomycota</taxon>
        <taxon>Saccharomycotina</taxon>
        <taxon>Saccharomycetes</taxon>
        <taxon>Saccharomycetales</taxon>
        <taxon>Saccharomycetaceae</taxon>
        <taxon>Saccharomyces</taxon>
    </lineage>
</organism>
<name>SIC1_YEAST</name>
<gene>
    <name type="primary">SIC1</name>
    <name type="synonym">SDB25</name>
    <name type="ordered locus">YLR079W</name>
    <name type="ORF">L9449.8</name>
</gene>
<proteinExistence type="evidence at protein level"/>
<dbReference type="EMBL" id="U01300">
    <property type="protein sequence ID" value="AAA20052.1"/>
    <property type="molecule type" value="Genomic_DNA"/>
</dbReference>
<dbReference type="EMBL" id="X78309">
    <property type="protein sequence ID" value="CAA55118.1"/>
    <property type="molecule type" value="Genomic_DNA"/>
</dbReference>
<dbReference type="EMBL" id="Z73251">
    <property type="protein sequence ID" value="CAA97638.1"/>
    <property type="molecule type" value="Genomic_DNA"/>
</dbReference>
<dbReference type="EMBL" id="U53880">
    <property type="protein sequence ID" value="AAB67583.1"/>
    <property type="molecule type" value="Genomic_DNA"/>
</dbReference>
<dbReference type="EMBL" id="BK006945">
    <property type="protein sequence ID" value="DAA09395.1"/>
    <property type="molecule type" value="Genomic_DNA"/>
</dbReference>
<dbReference type="PIR" id="S47921">
    <property type="entry name" value="S47921"/>
</dbReference>
<dbReference type="RefSeq" id="NP_013180.1">
    <property type="nucleotide sequence ID" value="NM_001181966.1"/>
</dbReference>
<dbReference type="PDB" id="3V7D">
    <property type="method" value="X-ray"/>
    <property type="resolution" value="2.31 A"/>
    <property type="chains" value="E=67-85"/>
</dbReference>
<dbReference type="PDB" id="6G86">
    <property type="method" value="X-ray"/>
    <property type="resolution" value="1.74 A"/>
    <property type="chains" value="C/D=46-61"/>
</dbReference>
<dbReference type="PDB" id="8K0G">
    <property type="method" value="EM"/>
    <property type="resolution" value="3.80 A"/>
    <property type="chains" value="y=2-48"/>
</dbReference>
<dbReference type="PDBsum" id="3V7D"/>
<dbReference type="PDBsum" id="6G86"/>
<dbReference type="PDBsum" id="8K0G"/>
<dbReference type="BMRB" id="P38634"/>
<dbReference type="EMDB" id="EMD-36764"/>
<dbReference type="PCDDB" id="P38634"/>
<dbReference type="SMR" id="P38634"/>
<dbReference type="BioGRID" id="31352">
    <property type="interactions" value="721"/>
</dbReference>
<dbReference type="DIP" id="DIP-6817N"/>
<dbReference type="ELM" id="P38634"/>
<dbReference type="FunCoup" id="P38634">
    <property type="interactions" value="426"/>
</dbReference>
<dbReference type="IntAct" id="P38634">
    <property type="interactions" value="26"/>
</dbReference>
<dbReference type="MINT" id="P38634"/>
<dbReference type="STRING" id="4932.YLR079W"/>
<dbReference type="GlyGen" id="P38634">
    <property type="glycosylation" value="2 sites, 1 O-linked glycan (2 sites)"/>
</dbReference>
<dbReference type="iPTMnet" id="P38634"/>
<dbReference type="PaxDb" id="4932-YLR079W"/>
<dbReference type="PeptideAtlas" id="P38634"/>
<dbReference type="EnsemblFungi" id="YLR079W_mRNA">
    <property type="protein sequence ID" value="YLR079W"/>
    <property type="gene ID" value="YLR079W"/>
</dbReference>
<dbReference type="GeneID" id="850768"/>
<dbReference type="KEGG" id="sce:YLR079W"/>
<dbReference type="AGR" id="SGD:S000004069"/>
<dbReference type="SGD" id="S000004069">
    <property type="gene designation" value="SIC1"/>
</dbReference>
<dbReference type="VEuPathDB" id="FungiDB:YLR079W"/>
<dbReference type="eggNOG" id="ENOG502S3ZS">
    <property type="taxonomic scope" value="Eukaryota"/>
</dbReference>
<dbReference type="HOGENOM" id="CLU_086083_0_0_1"/>
<dbReference type="InParanoid" id="P38634"/>
<dbReference type="OMA" id="KNWNNNS"/>
<dbReference type="OrthoDB" id="4060584at2759"/>
<dbReference type="BioCyc" id="YEAST:G3O-32230-MONOMER"/>
<dbReference type="BioGRID-ORCS" id="850768">
    <property type="hits" value="10 hits in 10 CRISPR screens"/>
</dbReference>
<dbReference type="EvolutionaryTrace" id="P38634"/>
<dbReference type="PRO" id="PR:P38634"/>
<dbReference type="Proteomes" id="UP000002311">
    <property type="component" value="Chromosome XII"/>
</dbReference>
<dbReference type="RNAct" id="P38634">
    <property type="molecule type" value="protein"/>
</dbReference>
<dbReference type="GO" id="GO:0005737">
    <property type="term" value="C:cytoplasm"/>
    <property type="evidence" value="ECO:0000314"/>
    <property type="project" value="SGD"/>
</dbReference>
<dbReference type="GO" id="GO:0005634">
    <property type="term" value="C:nucleus"/>
    <property type="evidence" value="ECO:0000314"/>
    <property type="project" value="SGD"/>
</dbReference>
<dbReference type="GO" id="GO:0004861">
    <property type="term" value="F:cyclin-dependent protein serine/threonine kinase inhibitor activity"/>
    <property type="evidence" value="ECO:0000314"/>
    <property type="project" value="SGD"/>
</dbReference>
<dbReference type="GO" id="GO:1905761">
    <property type="term" value="F:SCF ubiquitin ligase complex binding"/>
    <property type="evidence" value="ECO:0000314"/>
    <property type="project" value="DisProt"/>
</dbReference>
<dbReference type="GO" id="GO:0000082">
    <property type="term" value="P:G1/S transition of mitotic cell cycle"/>
    <property type="evidence" value="ECO:0000316"/>
    <property type="project" value="SGD"/>
</dbReference>
<dbReference type="GO" id="GO:0016242">
    <property type="term" value="P:negative regulation of macroautophagy"/>
    <property type="evidence" value="ECO:0000315"/>
    <property type="project" value="SGD"/>
</dbReference>
<dbReference type="DisProt" id="DP00631"/>
<dbReference type="IDEAL" id="IID50275"/>
<reference key="1">
    <citation type="journal article" date="1994" name="Mol. Cell. Biol.">
        <title>An inhibitor of yeast cyclin-dependent protein kinase plays an important role in ensuring the genomic integrity of daughter cells.</title>
        <authorList>
            <person name="Nugroho T.T."/>
            <person name="Mendenhall M.D."/>
        </authorList>
    </citation>
    <scope>NUCLEOTIDE SEQUENCE [GENOMIC DNA]</scope>
    <scope>PROTEIN SEQUENCE OF 182-188; 238-250 AND 260-283</scope>
    <source>
        <strain>ATCC 204508 / S288c</strain>
    </source>
</reference>
<reference key="2">
    <citation type="journal article" date="1994" name="Genes Dev.">
        <title>P40SDB25, a putative CDK inhibitor, has a role in the M/G1 transition in Saccharomyces cerevisiae.</title>
        <authorList>
            <person name="Donovan J.D."/>
            <person name="Toyn J.H."/>
            <person name="Johnson A.L."/>
            <person name="Johnston L.H."/>
        </authorList>
    </citation>
    <scope>NUCLEOTIDE SEQUENCE [GENOMIC DNA]</scope>
</reference>
<reference key="3">
    <citation type="journal article" date="1997" name="Nature">
        <title>The nucleotide sequence of Saccharomyces cerevisiae chromosome XII.</title>
        <authorList>
            <person name="Johnston M."/>
            <person name="Hillier L.W."/>
            <person name="Riles L."/>
            <person name="Albermann K."/>
            <person name="Andre B."/>
            <person name="Ansorge W."/>
            <person name="Benes V."/>
            <person name="Brueckner M."/>
            <person name="Delius H."/>
            <person name="Dubois E."/>
            <person name="Duesterhoeft A."/>
            <person name="Entian K.-D."/>
            <person name="Floeth M."/>
            <person name="Goffeau A."/>
            <person name="Hebling U."/>
            <person name="Heumann K."/>
            <person name="Heuss-Neitzel D."/>
            <person name="Hilbert H."/>
            <person name="Hilger F."/>
            <person name="Kleine K."/>
            <person name="Koetter P."/>
            <person name="Louis E.J."/>
            <person name="Messenguy F."/>
            <person name="Mewes H.-W."/>
            <person name="Miosga T."/>
            <person name="Moestl D."/>
            <person name="Mueller-Auer S."/>
            <person name="Nentwich U."/>
            <person name="Obermaier B."/>
            <person name="Piravandi E."/>
            <person name="Pohl T.M."/>
            <person name="Portetelle D."/>
            <person name="Purnelle B."/>
            <person name="Rechmann S."/>
            <person name="Rieger M."/>
            <person name="Rinke M."/>
            <person name="Rose M."/>
            <person name="Scharfe M."/>
            <person name="Scherens B."/>
            <person name="Scholler P."/>
            <person name="Schwager C."/>
            <person name="Schwarz S."/>
            <person name="Underwood A.P."/>
            <person name="Urrestarazu L.A."/>
            <person name="Vandenbol M."/>
            <person name="Verhasselt P."/>
            <person name="Vierendeels F."/>
            <person name="Voet M."/>
            <person name="Volckaert G."/>
            <person name="Voss H."/>
            <person name="Wambutt R."/>
            <person name="Wedler E."/>
            <person name="Wedler H."/>
            <person name="Zimmermann F.K."/>
            <person name="Zollner A."/>
            <person name="Hani J."/>
            <person name="Hoheisel J.D."/>
        </authorList>
    </citation>
    <scope>NUCLEOTIDE SEQUENCE [LARGE SCALE GENOMIC DNA]</scope>
    <source>
        <strain>ATCC 204508 / S288c</strain>
    </source>
</reference>
<reference key="4">
    <citation type="journal article" date="2014" name="G3 (Bethesda)">
        <title>The reference genome sequence of Saccharomyces cerevisiae: Then and now.</title>
        <authorList>
            <person name="Engel S.R."/>
            <person name="Dietrich F.S."/>
            <person name="Fisk D.G."/>
            <person name="Binkley G."/>
            <person name="Balakrishnan R."/>
            <person name="Costanzo M.C."/>
            <person name="Dwight S.S."/>
            <person name="Hitz B.C."/>
            <person name="Karra K."/>
            <person name="Nash R.S."/>
            <person name="Weng S."/>
            <person name="Wong E.D."/>
            <person name="Lloyd P."/>
            <person name="Skrzypek M.S."/>
            <person name="Miyasato S.R."/>
            <person name="Simison M."/>
            <person name="Cherry J.M."/>
        </authorList>
    </citation>
    <scope>GENOME REANNOTATION</scope>
    <source>
        <strain>ATCC 204508 / S288c</strain>
    </source>
</reference>
<reference key="5">
    <citation type="journal article" date="1998" name="Mol. Biol. Cell">
        <title>Phosphorylation of Sic1, a cyclin-dependent kinase (Cdk) inhibitor, by Cdk including Pho85 kinase is required for its prompt degradation.</title>
        <authorList>
            <person name="Nishizawa M."/>
            <person name="Kawasumi M."/>
            <person name="Fujino M."/>
            <person name="Toh-e A."/>
        </authorList>
    </citation>
    <scope>PHOSPHORYLATION AT THR-5; THR-33 AND SER-76</scope>
</reference>
<reference key="6">
    <citation type="journal article" date="2003" name="Nature">
        <title>Global analysis of protein localization in budding yeast.</title>
        <authorList>
            <person name="Huh W.-K."/>
            <person name="Falvo J.V."/>
            <person name="Gerke L.C."/>
            <person name="Carroll A.S."/>
            <person name="Howson R.W."/>
            <person name="Weissman J.S."/>
            <person name="O'Shea E.K."/>
        </authorList>
    </citation>
    <scope>SUBCELLULAR LOCATION [LARGE SCALE ANALYSIS]</scope>
</reference>
<reference key="7">
    <citation type="journal article" date="2003" name="Nature">
        <title>Global analysis of protein expression in yeast.</title>
        <authorList>
            <person name="Ghaemmaghami S."/>
            <person name="Huh W.-K."/>
            <person name="Bower K."/>
            <person name="Howson R.W."/>
            <person name="Belle A."/>
            <person name="Dephoure N."/>
            <person name="O'Shea E.K."/>
            <person name="Weissman J.S."/>
        </authorList>
    </citation>
    <scope>LEVEL OF PROTEIN EXPRESSION [LARGE SCALE ANALYSIS]</scope>
</reference>
<reference key="8">
    <citation type="journal article" date="2004" name="Nat. Cell Biol.">
        <title>Hog1 mediates cell-cycle arrest in G1 phase by the dual targeting of Sic1.</title>
        <authorList>
            <person name="Escote X."/>
            <person name="Zapater M."/>
            <person name="Clotet J."/>
            <person name="Posas F."/>
        </authorList>
    </citation>
    <scope>FUNCTION</scope>
    <scope>PHOSPHORYLATION AT THR-173</scope>
    <scope>MUTAGENESIS OF THR-173</scope>
    <scope>INTERACTION WITH HOG1</scope>
</reference>
<reference key="9">
    <citation type="journal article" date="2005" name="Mol. Cell. Proteomics">
        <title>Quantitative phosphoproteomics applied to the yeast pheromone signaling pathway.</title>
        <authorList>
            <person name="Gruhler A."/>
            <person name="Olsen J.V."/>
            <person name="Mohammed S."/>
            <person name="Mortensen P."/>
            <person name="Faergeman N.J."/>
            <person name="Mann M."/>
            <person name="Jensen O.N."/>
        </authorList>
    </citation>
    <scope>PHOSPHORYLATION [LARGE SCALE ANALYSIS] AT SER-198</scope>
    <scope>IDENTIFICATION BY MASS SPECTROMETRY [LARGE SCALE ANALYSIS]</scope>
    <source>
        <strain>YAL6B</strain>
    </source>
</reference>
<reference key="10">
    <citation type="journal article" date="2007" name="J. Proteome Res.">
        <title>Large-scale phosphorylation analysis of alpha-factor-arrested Saccharomyces cerevisiae.</title>
        <authorList>
            <person name="Li X."/>
            <person name="Gerber S.A."/>
            <person name="Rudner A.D."/>
            <person name="Beausoleil S.A."/>
            <person name="Haas W."/>
            <person name="Villen J."/>
            <person name="Elias J.E."/>
            <person name="Gygi S.P."/>
        </authorList>
    </citation>
    <scope>PHOSPHORYLATION [LARGE SCALE ANALYSIS] AT THR-173 AND SER-201</scope>
    <scope>IDENTIFICATION BY MASS SPECTROMETRY [LARGE SCALE ANALYSIS]</scope>
    <source>
        <strain>ADR376</strain>
    </source>
</reference>
<reference key="11">
    <citation type="journal article" date="2008" name="Mol. Cell. Proteomics">
        <title>A multidimensional chromatography technology for in-depth phosphoproteome analysis.</title>
        <authorList>
            <person name="Albuquerque C.P."/>
            <person name="Smolka M.B."/>
            <person name="Payne S.H."/>
            <person name="Bafna V."/>
            <person name="Eng J."/>
            <person name="Zhou H."/>
        </authorList>
    </citation>
    <scope>IDENTIFICATION BY MASS SPECTROMETRY [LARGE SCALE ANALYSIS]</scope>
</reference>
<reference key="12">
    <citation type="journal article" date="2009" name="Science">
        <title>Global analysis of Cdk1 substrate phosphorylation sites provides insights into evolution.</title>
        <authorList>
            <person name="Holt L.J."/>
            <person name="Tuch B.B."/>
            <person name="Villen J."/>
            <person name="Johnson A.D."/>
            <person name="Gygi S.P."/>
            <person name="Morgan D.O."/>
        </authorList>
    </citation>
    <scope>PHOSPHORYLATION [LARGE SCALE ANALYSIS] AT SER-198 AND SER-201</scope>
    <scope>IDENTIFICATION BY MASS SPECTROMETRY [LARGE SCALE ANALYSIS]</scope>
</reference>